<protein>
    <recommendedName>
        <fullName evidence="1">NAD-capped RNA hydrolase NudC</fullName>
        <shortName evidence="1">DeNADding enzyme NudC</shortName>
        <ecNumber evidence="1">3.6.1.-</ecNumber>
    </recommendedName>
    <alternativeName>
        <fullName evidence="1">NADH pyrophosphatase</fullName>
        <ecNumber evidence="1">3.6.1.22</ecNumber>
    </alternativeName>
</protein>
<dbReference type="EC" id="3.6.1.-" evidence="1"/>
<dbReference type="EC" id="3.6.1.22" evidence="1"/>
<dbReference type="EMBL" id="CP000026">
    <property type="protein sequence ID" value="AAV79755.1"/>
    <property type="molecule type" value="Genomic_DNA"/>
</dbReference>
<dbReference type="RefSeq" id="WP_000373958.1">
    <property type="nucleotide sequence ID" value="NC_006511.1"/>
</dbReference>
<dbReference type="SMR" id="Q5PKA4"/>
<dbReference type="KEGG" id="spt:SPA4003"/>
<dbReference type="HOGENOM" id="CLU_037162_0_1_6"/>
<dbReference type="Proteomes" id="UP000008185">
    <property type="component" value="Chromosome"/>
</dbReference>
<dbReference type="GO" id="GO:0005829">
    <property type="term" value="C:cytosol"/>
    <property type="evidence" value="ECO:0007669"/>
    <property type="project" value="TreeGrafter"/>
</dbReference>
<dbReference type="GO" id="GO:0000287">
    <property type="term" value="F:magnesium ion binding"/>
    <property type="evidence" value="ECO:0007669"/>
    <property type="project" value="UniProtKB-UniRule"/>
</dbReference>
<dbReference type="GO" id="GO:0030145">
    <property type="term" value="F:manganese ion binding"/>
    <property type="evidence" value="ECO:0007669"/>
    <property type="project" value="UniProtKB-UniRule"/>
</dbReference>
<dbReference type="GO" id="GO:0000210">
    <property type="term" value="F:NAD+ diphosphatase activity"/>
    <property type="evidence" value="ECO:0007669"/>
    <property type="project" value="UniProtKB-UniRule"/>
</dbReference>
<dbReference type="GO" id="GO:0035529">
    <property type="term" value="F:NADH pyrophosphatase activity"/>
    <property type="evidence" value="ECO:0007669"/>
    <property type="project" value="TreeGrafter"/>
</dbReference>
<dbReference type="GO" id="GO:0110153">
    <property type="term" value="F:RNA NAD-cap (NMN-forming) hydrolase activity"/>
    <property type="evidence" value="ECO:0007669"/>
    <property type="project" value="RHEA"/>
</dbReference>
<dbReference type="GO" id="GO:0008270">
    <property type="term" value="F:zinc ion binding"/>
    <property type="evidence" value="ECO:0007669"/>
    <property type="project" value="UniProtKB-UniRule"/>
</dbReference>
<dbReference type="GO" id="GO:0019677">
    <property type="term" value="P:NAD catabolic process"/>
    <property type="evidence" value="ECO:0007669"/>
    <property type="project" value="TreeGrafter"/>
</dbReference>
<dbReference type="GO" id="GO:0006734">
    <property type="term" value="P:NADH metabolic process"/>
    <property type="evidence" value="ECO:0007669"/>
    <property type="project" value="TreeGrafter"/>
</dbReference>
<dbReference type="GO" id="GO:0006742">
    <property type="term" value="P:NADP catabolic process"/>
    <property type="evidence" value="ECO:0007669"/>
    <property type="project" value="TreeGrafter"/>
</dbReference>
<dbReference type="CDD" id="cd03429">
    <property type="entry name" value="NUDIX_NADH_pyrophosphatase_Nudt13"/>
    <property type="match status" value="1"/>
</dbReference>
<dbReference type="FunFam" id="3.90.79.10:FF:000004">
    <property type="entry name" value="NADH pyrophosphatase"/>
    <property type="match status" value="1"/>
</dbReference>
<dbReference type="FunFam" id="3.90.79.20:FF:000001">
    <property type="entry name" value="NADH pyrophosphatase"/>
    <property type="match status" value="1"/>
</dbReference>
<dbReference type="Gene3D" id="3.90.79.20">
    <property type="match status" value="1"/>
</dbReference>
<dbReference type="Gene3D" id="3.90.79.10">
    <property type="entry name" value="Nucleoside Triphosphate Pyrophosphohydrolase"/>
    <property type="match status" value="1"/>
</dbReference>
<dbReference type="HAMAP" id="MF_00297">
    <property type="entry name" value="Nudix_NudC"/>
    <property type="match status" value="1"/>
</dbReference>
<dbReference type="InterPro" id="IPR050241">
    <property type="entry name" value="NAD-cap_RNA_hydrolase_NudC"/>
</dbReference>
<dbReference type="InterPro" id="IPR049734">
    <property type="entry name" value="NudC-like_C"/>
</dbReference>
<dbReference type="InterPro" id="IPR015797">
    <property type="entry name" value="NUDIX_hydrolase-like_dom_sf"/>
</dbReference>
<dbReference type="InterPro" id="IPR020084">
    <property type="entry name" value="NUDIX_hydrolase_CS"/>
</dbReference>
<dbReference type="InterPro" id="IPR000086">
    <property type="entry name" value="NUDIX_hydrolase_dom"/>
</dbReference>
<dbReference type="InterPro" id="IPR022925">
    <property type="entry name" value="RNA_Hydrolase_NudC"/>
</dbReference>
<dbReference type="InterPro" id="IPR015376">
    <property type="entry name" value="Znr_NADH_PPase"/>
</dbReference>
<dbReference type="NCBIfam" id="NF001299">
    <property type="entry name" value="PRK00241.1"/>
    <property type="match status" value="1"/>
</dbReference>
<dbReference type="PANTHER" id="PTHR42904:SF6">
    <property type="entry name" value="NAD-CAPPED RNA HYDROLASE NUDT12"/>
    <property type="match status" value="1"/>
</dbReference>
<dbReference type="PANTHER" id="PTHR42904">
    <property type="entry name" value="NUDIX HYDROLASE, NUDC SUBFAMILY"/>
    <property type="match status" value="1"/>
</dbReference>
<dbReference type="Pfam" id="PF00293">
    <property type="entry name" value="NUDIX"/>
    <property type="match status" value="1"/>
</dbReference>
<dbReference type="Pfam" id="PF09297">
    <property type="entry name" value="Zn_ribbon_NUD"/>
    <property type="match status" value="1"/>
</dbReference>
<dbReference type="SUPFAM" id="SSF55811">
    <property type="entry name" value="Nudix"/>
    <property type="match status" value="2"/>
</dbReference>
<dbReference type="PROSITE" id="PS51462">
    <property type="entry name" value="NUDIX"/>
    <property type="match status" value="1"/>
</dbReference>
<dbReference type="PROSITE" id="PS00893">
    <property type="entry name" value="NUDIX_BOX"/>
    <property type="match status" value="1"/>
</dbReference>
<name>NUDC_SALPA</name>
<keyword id="KW-0378">Hydrolase</keyword>
<keyword id="KW-0460">Magnesium</keyword>
<keyword id="KW-0464">Manganese</keyword>
<keyword id="KW-0479">Metal-binding</keyword>
<keyword id="KW-0520">NAD</keyword>
<keyword id="KW-0862">Zinc</keyword>
<comment type="function">
    <text evidence="1">mRNA decapping enzyme that specifically removes the nicotinamide adenine dinucleotide (NAD) cap from a subset of mRNAs by hydrolyzing the diphosphate linkage to produce nicotinamide mononucleotide (NMN) and 5' monophosphate mRNA. The NAD-cap is present at the 5'-end of some mRNAs and stabilizes RNA against 5'-processing. Has preference for mRNAs with a 5'-end purine. Catalyzes the hydrolysis of a broad range of dinucleotide pyrophosphates.</text>
</comment>
<comment type="catalytic activity">
    <reaction evidence="1">
        <text>a 5'-end NAD(+)-phospho-ribonucleoside in mRNA + H2O = a 5'-end phospho-adenosine-phospho-ribonucleoside in mRNA + beta-nicotinamide D-ribonucleotide + 2 H(+)</text>
        <dbReference type="Rhea" id="RHEA:60876"/>
        <dbReference type="Rhea" id="RHEA-COMP:15698"/>
        <dbReference type="Rhea" id="RHEA-COMP:15719"/>
        <dbReference type="ChEBI" id="CHEBI:14649"/>
        <dbReference type="ChEBI" id="CHEBI:15377"/>
        <dbReference type="ChEBI" id="CHEBI:15378"/>
        <dbReference type="ChEBI" id="CHEBI:144029"/>
        <dbReference type="ChEBI" id="CHEBI:144051"/>
    </reaction>
    <physiologicalReaction direction="left-to-right" evidence="1">
        <dbReference type="Rhea" id="RHEA:60877"/>
    </physiologicalReaction>
</comment>
<comment type="catalytic activity">
    <reaction evidence="1">
        <text>NAD(+) + H2O = beta-nicotinamide D-ribonucleotide + AMP + 2 H(+)</text>
        <dbReference type="Rhea" id="RHEA:11800"/>
        <dbReference type="ChEBI" id="CHEBI:14649"/>
        <dbReference type="ChEBI" id="CHEBI:15377"/>
        <dbReference type="ChEBI" id="CHEBI:15378"/>
        <dbReference type="ChEBI" id="CHEBI:57540"/>
        <dbReference type="ChEBI" id="CHEBI:456215"/>
        <dbReference type="EC" id="3.6.1.22"/>
    </reaction>
</comment>
<comment type="catalytic activity">
    <reaction evidence="1">
        <text>NADH + H2O = reduced beta-nicotinamide D-ribonucleotide + AMP + 2 H(+)</text>
        <dbReference type="Rhea" id="RHEA:48868"/>
        <dbReference type="ChEBI" id="CHEBI:15377"/>
        <dbReference type="ChEBI" id="CHEBI:15378"/>
        <dbReference type="ChEBI" id="CHEBI:57945"/>
        <dbReference type="ChEBI" id="CHEBI:90832"/>
        <dbReference type="ChEBI" id="CHEBI:456215"/>
        <dbReference type="EC" id="3.6.1.22"/>
    </reaction>
</comment>
<comment type="cofactor">
    <cofactor evidence="1">
        <name>Mg(2+)</name>
        <dbReference type="ChEBI" id="CHEBI:18420"/>
    </cofactor>
    <cofactor evidence="1">
        <name>Mn(2+)</name>
        <dbReference type="ChEBI" id="CHEBI:29035"/>
    </cofactor>
    <text evidence="1">Divalent metal cations. Mg(2+) or Mn(2+).</text>
</comment>
<comment type="cofactor">
    <cofactor evidence="1">
        <name>Zn(2+)</name>
        <dbReference type="ChEBI" id="CHEBI:29105"/>
    </cofactor>
    <text evidence="1">Binds 1 zinc ion per subunit.</text>
</comment>
<comment type="subunit">
    <text evidence="1">Homodimer.</text>
</comment>
<comment type="similarity">
    <text evidence="1">Belongs to the Nudix hydrolase family. NudC subfamily.</text>
</comment>
<accession>Q5PKA4</accession>
<proteinExistence type="inferred from homology"/>
<sequence>MDRIIEKLESGWWIVSHEQKLWLPYGELPHGLAANFDLVGQRALRIGEWQGEPVWLVLQHRRHDMGSVRQVIDQDAGLFQLAGRGVQLAEFYRSHKFCGYCGHPMHPSKTEWAMLCSHCRERYYPQIAPCIIVAIRREDSILLAQHVRHRNGVHTVLAGFVEVGETLEQAVAREVMEESGIKVKNLRYVTSQPWPFPQSLMTAFMAEYDSGEIVIDPKELLEANWYRYDDLPLLPPPGTVARRLIEDTVAMCRAEYD</sequence>
<evidence type="ECO:0000255" key="1">
    <source>
        <dbReference type="HAMAP-Rule" id="MF_00297"/>
    </source>
</evidence>
<organism>
    <name type="scientific">Salmonella paratyphi A (strain ATCC 9150 / SARB42)</name>
    <dbReference type="NCBI Taxonomy" id="295319"/>
    <lineage>
        <taxon>Bacteria</taxon>
        <taxon>Pseudomonadati</taxon>
        <taxon>Pseudomonadota</taxon>
        <taxon>Gammaproteobacteria</taxon>
        <taxon>Enterobacterales</taxon>
        <taxon>Enterobacteriaceae</taxon>
        <taxon>Salmonella</taxon>
    </lineage>
</organism>
<feature type="chain" id="PRO_0000232121" description="NAD-capped RNA hydrolase NudC">
    <location>
        <begin position="1"/>
        <end position="257"/>
    </location>
</feature>
<feature type="domain" description="Nudix hydrolase" evidence="1">
    <location>
        <begin position="125"/>
        <end position="248"/>
    </location>
</feature>
<feature type="short sequence motif" description="Nudix box" evidence="1">
    <location>
        <begin position="159"/>
        <end position="180"/>
    </location>
</feature>
<feature type="binding site" evidence="1">
    <location>
        <position position="69"/>
    </location>
    <ligand>
        <name>substrate</name>
    </ligand>
</feature>
<feature type="binding site" evidence="1">
    <location>
        <position position="98"/>
    </location>
    <ligand>
        <name>Zn(2+)</name>
        <dbReference type="ChEBI" id="CHEBI:29105"/>
    </ligand>
</feature>
<feature type="binding site" evidence="1">
    <location>
        <position position="101"/>
    </location>
    <ligand>
        <name>Zn(2+)</name>
        <dbReference type="ChEBI" id="CHEBI:29105"/>
    </ligand>
</feature>
<feature type="binding site" evidence="1">
    <location>
        <position position="111"/>
    </location>
    <ligand>
        <name>substrate</name>
    </ligand>
</feature>
<feature type="binding site" evidence="1">
    <location>
        <position position="116"/>
    </location>
    <ligand>
        <name>Zn(2+)</name>
        <dbReference type="ChEBI" id="CHEBI:29105"/>
    </ligand>
</feature>
<feature type="binding site" evidence="1">
    <location>
        <position position="119"/>
    </location>
    <ligand>
        <name>Zn(2+)</name>
        <dbReference type="ChEBI" id="CHEBI:29105"/>
    </ligand>
</feature>
<feature type="binding site" evidence="1">
    <location>
        <position position="124"/>
    </location>
    <ligand>
        <name>substrate</name>
    </ligand>
</feature>
<feature type="binding site" evidence="1">
    <location>
        <position position="158"/>
    </location>
    <ligand>
        <name>a divalent metal cation</name>
        <dbReference type="ChEBI" id="CHEBI:60240"/>
        <label>1</label>
    </ligand>
</feature>
<feature type="binding site" evidence="1">
    <location>
        <position position="174"/>
    </location>
    <ligand>
        <name>a divalent metal cation</name>
        <dbReference type="ChEBI" id="CHEBI:60240"/>
        <label>2</label>
    </ligand>
</feature>
<feature type="binding site" evidence="1">
    <location>
        <position position="174"/>
    </location>
    <ligand>
        <name>a divalent metal cation</name>
        <dbReference type="ChEBI" id="CHEBI:60240"/>
        <label>3</label>
    </ligand>
</feature>
<feature type="binding site" evidence="1">
    <location>
        <position position="178"/>
    </location>
    <ligand>
        <name>a divalent metal cation</name>
        <dbReference type="ChEBI" id="CHEBI:60240"/>
        <label>1</label>
    </ligand>
</feature>
<feature type="binding site" evidence="1">
    <location>
        <position position="178"/>
    </location>
    <ligand>
        <name>a divalent metal cation</name>
        <dbReference type="ChEBI" id="CHEBI:60240"/>
        <label>3</label>
    </ligand>
</feature>
<feature type="binding site" evidence="1">
    <location>
        <begin position="192"/>
        <end position="199"/>
    </location>
    <ligand>
        <name>substrate</name>
    </ligand>
</feature>
<feature type="binding site" evidence="1">
    <location>
        <position position="219"/>
    </location>
    <ligand>
        <name>a divalent metal cation</name>
        <dbReference type="ChEBI" id="CHEBI:60240"/>
        <label>1</label>
    </ligand>
</feature>
<feature type="binding site" evidence="1">
    <location>
        <position position="219"/>
    </location>
    <ligand>
        <name>a divalent metal cation</name>
        <dbReference type="ChEBI" id="CHEBI:60240"/>
        <label>3</label>
    </ligand>
</feature>
<feature type="binding site" evidence="1">
    <location>
        <position position="241"/>
    </location>
    <ligand>
        <name>substrate</name>
    </ligand>
</feature>
<reference key="1">
    <citation type="journal article" date="2004" name="Nat. Genet.">
        <title>Comparison of genome degradation in Paratyphi A and Typhi, human-restricted serovars of Salmonella enterica that cause typhoid.</title>
        <authorList>
            <person name="McClelland M."/>
            <person name="Sanderson K.E."/>
            <person name="Clifton S.W."/>
            <person name="Latreille P."/>
            <person name="Porwollik S."/>
            <person name="Sabo A."/>
            <person name="Meyer R."/>
            <person name="Bieri T."/>
            <person name="Ozersky P."/>
            <person name="McLellan M."/>
            <person name="Harkins C.R."/>
            <person name="Wang C."/>
            <person name="Nguyen C."/>
            <person name="Berghoff A."/>
            <person name="Elliott G."/>
            <person name="Kohlberg S."/>
            <person name="Strong C."/>
            <person name="Du F."/>
            <person name="Carter J."/>
            <person name="Kremizki C."/>
            <person name="Layman D."/>
            <person name="Leonard S."/>
            <person name="Sun H."/>
            <person name="Fulton L."/>
            <person name="Nash W."/>
            <person name="Miner T."/>
            <person name="Minx P."/>
            <person name="Delehaunty K."/>
            <person name="Fronick C."/>
            <person name="Magrini V."/>
            <person name="Nhan M."/>
            <person name="Warren W."/>
            <person name="Florea L."/>
            <person name="Spieth J."/>
            <person name="Wilson R.K."/>
        </authorList>
    </citation>
    <scope>NUCLEOTIDE SEQUENCE [LARGE SCALE GENOMIC DNA]</scope>
    <source>
        <strain>ATCC 9150 / SARB42</strain>
    </source>
</reference>
<gene>
    <name evidence="1" type="primary">nudC</name>
    <name type="ordered locus">SPA4003</name>
</gene>